<protein>
    <recommendedName>
        <fullName evidence="4">Large ribosomal subunit protein eL34</fullName>
    </recommendedName>
    <alternativeName>
        <fullName>60S ribosomal protein L34</fullName>
    </alternativeName>
</protein>
<accession>Q1WBV0</accession>
<evidence type="ECO:0000250" key="1">
    <source>
        <dbReference type="UniProtKB" id="P49207"/>
    </source>
</evidence>
<evidence type="ECO:0000250" key="2">
    <source>
        <dbReference type="UniProtKB" id="Q29223"/>
    </source>
</evidence>
<evidence type="ECO:0000256" key="3">
    <source>
        <dbReference type="SAM" id="MobiDB-lite"/>
    </source>
</evidence>
<evidence type="ECO:0000305" key="4"/>
<reference key="1">
    <citation type="submission" date="2006-02" db="EMBL/GenBank/DDBJ databases">
        <title>Sequencing and characterization of ribosomal protein L34 Full-length cDNA of Alpaca (Lama pacos) skin.</title>
        <authorList>
            <person name="Dong C.S."/>
            <person name="Li P.F."/>
            <person name="Bai R."/>
            <person name="He X.Y."/>
        </authorList>
    </citation>
    <scope>NUCLEOTIDE SEQUENCE [MRNA]</scope>
    <source>
        <tissue>Skin</tissue>
    </source>
</reference>
<name>RL34_VICPA</name>
<sequence length="117" mass="13678">MVQRLTYRRRLSYNTASNKTRLSRTPGQQDRLPLHQEGRESTYIRMWRVPRQTARGPCCETQVLMRLSKTKKHVSRAYGGSMCAKCVRDRIKRAFLIEEQKIVVKVLKAQAQSQKAK</sequence>
<organism>
    <name type="scientific">Vicugna pacos</name>
    <name type="common">Alpaca</name>
    <name type="synonym">Lama pacos</name>
    <dbReference type="NCBI Taxonomy" id="30538"/>
    <lineage>
        <taxon>Eukaryota</taxon>
        <taxon>Metazoa</taxon>
        <taxon>Chordata</taxon>
        <taxon>Craniata</taxon>
        <taxon>Vertebrata</taxon>
        <taxon>Euteleostomi</taxon>
        <taxon>Mammalia</taxon>
        <taxon>Eutheria</taxon>
        <taxon>Laurasiatheria</taxon>
        <taxon>Artiodactyla</taxon>
        <taxon>Tylopoda</taxon>
        <taxon>Camelidae</taxon>
        <taxon>Vicugna</taxon>
    </lineage>
</organism>
<comment type="function">
    <text evidence="1">Component of the large ribosomal subunit. The ribosome is a large ribonucleoprotein complex responsible for the synthesis of proteins in the cell.</text>
</comment>
<comment type="subunit">
    <text evidence="1">Component of the large ribosomal subunit.</text>
</comment>
<comment type="subcellular location">
    <subcellularLocation>
        <location evidence="1">Cytoplasm</location>
        <location evidence="1">Cytosol</location>
    </subcellularLocation>
    <subcellularLocation>
        <location evidence="1">Cytoplasm</location>
    </subcellularLocation>
    <subcellularLocation>
        <location evidence="2">Endoplasmic reticulum</location>
    </subcellularLocation>
    <text evidence="1 2">Detected on cytosolic polysomes (By similarity). Detected in ribosomes that are associated with the rough endoplasmic reticulum (By similarity).</text>
</comment>
<comment type="similarity">
    <text evidence="4">Belongs to the eukaryotic ribosomal protein eL34 family.</text>
</comment>
<dbReference type="EMBL" id="DQ407504">
    <property type="protein sequence ID" value="ABD90466.1"/>
    <property type="molecule type" value="mRNA"/>
</dbReference>
<dbReference type="SMR" id="Q1WBV0"/>
<dbReference type="FunCoup" id="Q1WBV0">
    <property type="interactions" value="2036"/>
</dbReference>
<dbReference type="InParanoid" id="Q1WBV0"/>
<dbReference type="Proteomes" id="UP000504605">
    <property type="component" value="Unplaced"/>
</dbReference>
<dbReference type="GO" id="GO:0005829">
    <property type="term" value="C:cytosol"/>
    <property type="evidence" value="ECO:0007669"/>
    <property type="project" value="UniProtKB-SubCell"/>
</dbReference>
<dbReference type="GO" id="GO:0005783">
    <property type="term" value="C:endoplasmic reticulum"/>
    <property type="evidence" value="ECO:0007669"/>
    <property type="project" value="UniProtKB-SubCell"/>
</dbReference>
<dbReference type="GO" id="GO:1990904">
    <property type="term" value="C:ribonucleoprotein complex"/>
    <property type="evidence" value="ECO:0007669"/>
    <property type="project" value="UniProtKB-KW"/>
</dbReference>
<dbReference type="GO" id="GO:0005840">
    <property type="term" value="C:ribosome"/>
    <property type="evidence" value="ECO:0007669"/>
    <property type="project" value="UniProtKB-KW"/>
</dbReference>
<dbReference type="GO" id="GO:0003735">
    <property type="term" value="F:structural constituent of ribosome"/>
    <property type="evidence" value="ECO:0007669"/>
    <property type="project" value="InterPro"/>
</dbReference>
<dbReference type="GO" id="GO:0006412">
    <property type="term" value="P:translation"/>
    <property type="evidence" value="ECO:0007669"/>
    <property type="project" value="InterPro"/>
</dbReference>
<dbReference type="Gene3D" id="6.20.340.10">
    <property type="match status" value="1"/>
</dbReference>
<dbReference type="Gene3D" id="6.20.370.70">
    <property type="match status" value="1"/>
</dbReference>
<dbReference type="InterPro" id="IPR008195">
    <property type="entry name" value="Ribosomal_eL34"/>
</dbReference>
<dbReference type="InterPro" id="IPR038562">
    <property type="entry name" value="Ribosomal_eL34_C_sf"/>
</dbReference>
<dbReference type="PANTHER" id="PTHR46595">
    <property type="entry name" value="60S RIBOSOMAL PROTEIN L34"/>
    <property type="match status" value="1"/>
</dbReference>
<dbReference type="Pfam" id="PF01199">
    <property type="entry name" value="Ribosomal_L34e"/>
    <property type="match status" value="1"/>
</dbReference>
<proteinExistence type="inferred from homology"/>
<keyword id="KW-0963">Cytoplasm</keyword>
<keyword id="KW-0256">Endoplasmic reticulum</keyword>
<keyword id="KW-1017">Isopeptide bond</keyword>
<keyword id="KW-0597">Phosphoprotein</keyword>
<keyword id="KW-1185">Reference proteome</keyword>
<keyword id="KW-0687">Ribonucleoprotein</keyword>
<keyword id="KW-0689">Ribosomal protein</keyword>
<keyword id="KW-0832">Ubl conjugation</keyword>
<feature type="chain" id="PRO_0000319304" description="Large ribosomal subunit protein eL34">
    <location>
        <begin position="1"/>
        <end position="117"/>
    </location>
</feature>
<feature type="region of interest" description="Disordered" evidence="3">
    <location>
        <begin position="16"/>
        <end position="35"/>
    </location>
</feature>
<feature type="compositionally biased region" description="Polar residues" evidence="3">
    <location>
        <begin position="16"/>
        <end position="28"/>
    </location>
</feature>
<feature type="modified residue" description="Phosphoserine" evidence="1">
    <location>
        <position position="12"/>
    </location>
</feature>
<feature type="cross-link" description="Glycyl lysine isopeptide (Lys-Gly) (interchain with G-Cter in SUMO2)" evidence="1">
    <location>
        <position position="108"/>
    </location>
</feature>
<gene>
    <name type="primary">RPL34</name>
</gene>